<dbReference type="EMBL" id="CP000771">
    <property type="protein sequence ID" value="ABS60975.1"/>
    <property type="molecule type" value="Genomic_DNA"/>
</dbReference>
<dbReference type="RefSeq" id="WP_011994288.1">
    <property type="nucleotide sequence ID" value="NC_009718.1"/>
</dbReference>
<dbReference type="SMR" id="A7HM42"/>
<dbReference type="STRING" id="381764.Fnod_1128"/>
<dbReference type="KEGG" id="fno:Fnod_1128"/>
<dbReference type="eggNOG" id="COG0093">
    <property type="taxonomic scope" value="Bacteria"/>
</dbReference>
<dbReference type="HOGENOM" id="CLU_095071_2_1_0"/>
<dbReference type="OrthoDB" id="9806379at2"/>
<dbReference type="Proteomes" id="UP000002415">
    <property type="component" value="Chromosome"/>
</dbReference>
<dbReference type="GO" id="GO:0022625">
    <property type="term" value="C:cytosolic large ribosomal subunit"/>
    <property type="evidence" value="ECO:0007669"/>
    <property type="project" value="TreeGrafter"/>
</dbReference>
<dbReference type="GO" id="GO:0070180">
    <property type="term" value="F:large ribosomal subunit rRNA binding"/>
    <property type="evidence" value="ECO:0007669"/>
    <property type="project" value="TreeGrafter"/>
</dbReference>
<dbReference type="GO" id="GO:0003735">
    <property type="term" value="F:structural constituent of ribosome"/>
    <property type="evidence" value="ECO:0007669"/>
    <property type="project" value="InterPro"/>
</dbReference>
<dbReference type="GO" id="GO:0006412">
    <property type="term" value="P:translation"/>
    <property type="evidence" value="ECO:0007669"/>
    <property type="project" value="UniProtKB-UniRule"/>
</dbReference>
<dbReference type="CDD" id="cd00337">
    <property type="entry name" value="Ribosomal_uL14"/>
    <property type="match status" value="1"/>
</dbReference>
<dbReference type="FunFam" id="2.40.150.20:FF:000001">
    <property type="entry name" value="50S ribosomal protein L14"/>
    <property type="match status" value="1"/>
</dbReference>
<dbReference type="Gene3D" id="2.40.150.20">
    <property type="entry name" value="Ribosomal protein L14"/>
    <property type="match status" value="1"/>
</dbReference>
<dbReference type="HAMAP" id="MF_01367">
    <property type="entry name" value="Ribosomal_uL14"/>
    <property type="match status" value="1"/>
</dbReference>
<dbReference type="InterPro" id="IPR000218">
    <property type="entry name" value="Ribosomal_uL14"/>
</dbReference>
<dbReference type="InterPro" id="IPR005745">
    <property type="entry name" value="Ribosomal_uL14_bac-type"/>
</dbReference>
<dbReference type="InterPro" id="IPR019972">
    <property type="entry name" value="Ribosomal_uL14_CS"/>
</dbReference>
<dbReference type="InterPro" id="IPR036853">
    <property type="entry name" value="Ribosomal_uL14_sf"/>
</dbReference>
<dbReference type="NCBIfam" id="TIGR01067">
    <property type="entry name" value="rplN_bact"/>
    <property type="match status" value="1"/>
</dbReference>
<dbReference type="PANTHER" id="PTHR11761">
    <property type="entry name" value="50S/60S RIBOSOMAL PROTEIN L14/L23"/>
    <property type="match status" value="1"/>
</dbReference>
<dbReference type="PANTHER" id="PTHR11761:SF3">
    <property type="entry name" value="LARGE RIBOSOMAL SUBUNIT PROTEIN UL14M"/>
    <property type="match status" value="1"/>
</dbReference>
<dbReference type="Pfam" id="PF00238">
    <property type="entry name" value="Ribosomal_L14"/>
    <property type="match status" value="1"/>
</dbReference>
<dbReference type="SMART" id="SM01374">
    <property type="entry name" value="Ribosomal_L14"/>
    <property type="match status" value="1"/>
</dbReference>
<dbReference type="SUPFAM" id="SSF50193">
    <property type="entry name" value="Ribosomal protein L14"/>
    <property type="match status" value="1"/>
</dbReference>
<dbReference type="PROSITE" id="PS00049">
    <property type="entry name" value="RIBOSOMAL_L14"/>
    <property type="match status" value="1"/>
</dbReference>
<organism>
    <name type="scientific">Fervidobacterium nodosum (strain ATCC 35602 / DSM 5306 / Rt17-B1)</name>
    <dbReference type="NCBI Taxonomy" id="381764"/>
    <lineage>
        <taxon>Bacteria</taxon>
        <taxon>Thermotogati</taxon>
        <taxon>Thermotogota</taxon>
        <taxon>Thermotogae</taxon>
        <taxon>Thermotogales</taxon>
        <taxon>Fervidobacteriaceae</taxon>
        <taxon>Fervidobacterium</taxon>
    </lineage>
</organism>
<proteinExistence type="inferred from homology"/>
<reference key="1">
    <citation type="submission" date="2007-07" db="EMBL/GenBank/DDBJ databases">
        <title>Complete sequence of Fervidobacterium nodosum Rt17-B1.</title>
        <authorList>
            <consortium name="US DOE Joint Genome Institute"/>
            <person name="Copeland A."/>
            <person name="Lucas S."/>
            <person name="Lapidus A."/>
            <person name="Barry K."/>
            <person name="Glavina del Rio T."/>
            <person name="Dalin E."/>
            <person name="Tice H."/>
            <person name="Pitluck S."/>
            <person name="Saunders E."/>
            <person name="Brettin T."/>
            <person name="Bruce D."/>
            <person name="Detter J.C."/>
            <person name="Han C."/>
            <person name="Schmutz J."/>
            <person name="Larimer F."/>
            <person name="Land M."/>
            <person name="Hauser L."/>
            <person name="Kyrpides N."/>
            <person name="Mikhailova N."/>
            <person name="Nelson K."/>
            <person name="Gogarten J.P."/>
            <person name="Noll K."/>
            <person name="Richardson P."/>
        </authorList>
    </citation>
    <scope>NUCLEOTIDE SEQUENCE [LARGE SCALE GENOMIC DNA]</scope>
    <source>
        <strain>ATCC 35602 / DSM 5306 / Rt17-B1</strain>
    </source>
</reference>
<evidence type="ECO:0000255" key="1">
    <source>
        <dbReference type="HAMAP-Rule" id="MF_01367"/>
    </source>
</evidence>
<evidence type="ECO:0000305" key="2"/>
<comment type="function">
    <text evidence="1">Binds to 23S rRNA. Forms part of two intersubunit bridges in the 70S ribosome.</text>
</comment>
<comment type="subunit">
    <text evidence="1">Part of the 50S ribosomal subunit. Forms a cluster with proteins L3 and L19. In the 70S ribosome, L14 and L19 interact and together make contacts with the 16S rRNA in bridges B5 and B8.</text>
</comment>
<comment type="similarity">
    <text evidence="1">Belongs to the universal ribosomal protein uL14 family.</text>
</comment>
<name>RL14_FERNB</name>
<protein>
    <recommendedName>
        <fullName evidence="1">Large ribosomal subunit protein uL14</fullName>
    </recommendedName>
    <alternativeName>
        <fullName evidence="2">50S ribosomal protein L14</fullName>
    </alternativeName>
</protein>
<sequence>MIQNESYLVAADNSGAKVLRVIRVLGGSHKQFGTIGDIVVCSVREAVPNTDIKKGDVVKAVVVRTKKEIRRPDGSYIRFDDNAAVVLDKFNQPKGTRVFGPVARELREKGFMKIVSLAPEVW</sequence>
<keyword id="KW-1185">Reference proteome</keyword>
<keyword id="KW-0687">Ribonucleoprotein</keyword>
<keyword id="KW-0689">Ribosomal protein</keyword>
<keyword id="KW-0694">RNA-binding</keyword>
<keyword id="KW-0699">rRNA-binding</keyword>
<accession>A7HM42</accession>
<gene>
    <name evidence="1" type="primary">rplN</name>
    <name type="ordered locus">Fnod_1128</name>
</gene>
<feature type="chain" id="PRO_1000073422" description="Large ribosomal subunit protein uL14">
    <location>
        <begin position="1"/>
        <end position="122"/>
    </location>
</feature>